<proteinExistence type="evidence at protein level"/>
<gene>
    <name evidence="8" type="primary">hydA</name>
    <name evidence="13" type="ordered locus">TM_1426</name>
    <name evidence="14" type="ORF">Tmari_1432</name>
</gene>
<evidence type="ECO:0000250" key="1">
    <source>
        <dbReference type="UniProtKB" id="P29166"/>
    </source>
</evidence>
<evidence type="ECO:0000250" key="2">
    <source>
        <dbReference type="UniProtKB" id="Q56221"/>
    </source>
</evidence>
<evidence type="ECO:0000255" key="3">
    <source>
        <dbReference type="PROSITE-ProRule" id="PRU00465"/>
    </source>
</evidence>
<evidence type="ECO:0000255" key="4">
    <source>
        <dbReference type="PROSITE-ProRule" id="PRU00711"/>
    </source>
</evidence>
<evidence type="ECO:0000255" key="5">
    <source>
        <dbReference type="PROSITE-ProRule" id="PRU01184"/>
    </source>
</evidence>
<evidence type="ECO:0000269" key="6">
    <source>
    </source>
</evidence>
<evidence type="ECO:0000269" key="7">
    <source>
    </source>
</evidence>
<evidence type="ECO:0000303" key="8">
    <source>
    </source>
</evidence>
<evidence type="ECO:0000303" key="9">
    <source>
    </source>
</evidence>
<evidence type="ECO:0000305" key="10"/>
<evidence type="ECO:0000305" key="11">
    <source>
    </source>
</evidence>
<evidence type="ECO:0000305" key="12">
    <source>
    </source>
</evidence>
<evidence type="ECO:0000312" key="13">
    <source>
        <dbReference type="EMBL" id="AAD36496.1"/>
    </source>
</evidence>
<evidence type="ECO:0000312" key="14">
    <source>
        <dbReference type="EMBL" id="AGL50356.1"/>
    </source>
</evidence>
<evidence type="ECO:0007829" key="15">
    <source>
        <dbReference type="PDB" id="7P5H"/>
    </source>
</evidence>
<evidence type="ECO:0007829" key="16">
    <source>
        <dbReference type="PDB" id="7P8N"/>
    </source>
</evidence>
<protein>
    <recommendedName>
        <fullName evidence="9">Bifurcating [FeFe] hydrogenase alpha subunit</fullName>
        <ecNumber evidence="7">1.12.1.4</ecNumber>
    </recommendedName>
    <alternativeName>
        <fullName evidence="10">Hydrogenase (NAD(+), ferredoxin) alpha subunit</fullName>
    </alternativeName>
    <alternativeName>
        <fullName evidence="8">Iron-hydrogenase alpha subunit</fullName>
    </alternativeName>
</protein>
<reference key="1">
    <citation type="journal article" date="1999" name="Biochim. Biophys. Acta">
        <title>The hyperthermophilic bacterium, Thermotoga maritima, contains an unusually complex iron-hydrogenase: amino acid sequence analyses versus biochemical characterization.</title>
        <authorList>
            <person name="Verhagen M.F."/>
            <person name="O'Rourke T."/>
            <person name="Adams M.W."/>
        </authorList>
    </citation>
    <scope>NUCLEOTIDE SEQUENCE [GENOMIC DNA]</scope>
    <scope>PROTEIN SEQUENCE OF 1-15</scope>
    <scope>COFACTOR</scope>
    <scope>SUBUNIT</scope>
    <source>
        <strain>ATCC 43589 / DSM 3109 / JCM 10099 / NBRC 100826 / MSB8</strain>
    </source>
</reference>
<reference key="2">
    <citation type="journal article" date="1999" name="Nature">
        <title>Evidence for lateral gene transfer between Archaea and Bacteria from genome sequence of Thermotoga maritima.</title>
        <authorList>
            <person name="Nelson K.E."/>
            <person name="Clayton R.A."/>
            <person name="Gill S.R."/>
            <person name="Gwinn M.L."/>
            <person name="Dodson R.J."/>
            <person name="Haft D.H."/>
            <person name="Hickey E.K."/>
            <person name="Peterson J.D."/>
            <person name="Nelson W.C."/>
            <person name="Ketchum K.A."/>
            <person name="McDonald L.A."/>
            <person name="Utterback T.R."/>
            <person name="Malek J.A."/>
            <person name="Linher K.D."/>
            <person name="Garrett M.M."/>
            <person name="Stewart A.M."/>
            <person name="Cotton M.D."/>
            <person name="Pratt M.S."/>
            <person name="Phillips C.A."/>
            <person name="Richardson D.L."/>
            <person name="Heidelberg J.F."/>
            <person name="Sutton G.G."/>
            <person name="Fleischmann R.D."/>
            <person name="Eisen J.A."/>
            <person name="White O."/>
            <person name="Salzberg S.L."/>
            <person name="Smith H.O."/>
            <person name="Venter J.C."/>
            <person name="Fraser C.M."/>
        </authorList>
    </citation>
    <scope>NUCLEOTIDE SEQUENCE [LARGE SCALE GENOMIC DNA]</scope>
    <source>
        <strain>ATCC 43589 / DSM 3109 / JCM 10099 / NBRC 100826 / MSB8</strain>
    </source>
</reference>
<reference key="3">
    <citation type="journal article" date="2013" name="PLoS Genet.">
        <title>The genome organization of Thermotoga maritima reflects its lifestyle.</title>
        <authorList>
            <person name="Latif H."/>
            <person name="Lerman J.A."/>
            <person name="Portnoy V.A."/>
            <person name="Tarasova Y."/>
            <person name="Nagarajan H."/>
            <person name="Schrimpe-Rutledge A.C."/>
            <person name="Smith R.D."/>
            <person name="Adkins J.N."/>
            <person name="Lee D.H."/>
            <person name="Qiu Y."/>
            <person name="Zengler K."/>
        </authorList>
    </citation>
    <scope>NUCLEOTIDE SEQUENCE [LARGE SCALE GENOMIC DNA]</scope>
    <source>
        <strain>ATCC 43589 / DSM 3109 / JCM 10099 / NBRC 100826 / MSB8</strain>
    </source>
</reference>
<reference key="4">
    <citation type="journal article" date="2009" name="J. Bacteriol.">
        <title>The iron-hydrogenase of Thermotoga maritima utilizes ferredoxin and NADH synergistically: a new perspective on anaerobic hydrogen production.</title>
        <authorList>
            <person name="Schut G.J."/>
            <person name="Adams M.W."/>
        </authorList>
    </citation>
    <scope>FUNCTION</scope>
    <scope>CATALYTIC ACTIVITY</scope>
    <scope>COFACTOR</scope>
    <scope>SUBCELLULAR LOCATION</scope>
    <source>
        <strain>ATCC 43589 / DSM 3109 / JCM 10099 / NBRC 100826 / MSB8</strain>
    </source>
</reference>
<accession>O52683</accession>
<accession>G4FFG1</accession>
<accession>Q7DF97</accession>
<sequence length="645" mass="72254">MKIYVDGREVIINDNERNLLEALKNVGIEIPNLCYLSEASIYGACRMCLVEINGQITTSCTLKPYEGMKVKTNTPEIYEMRRNILELILATHNRDCTTCDRNGSCKLQKYAEDFGIRKIRFEALKKEHVRDESAPVVRDTSKCILCGDCVRVCEEIQGVGVIEFAKRGFESVVTTAFDTPLIETECVLCGQCVAYCPTGALSIRNDIDKLIEALESDKIVIGMIAPAVRAAIQEEFGIDEDVAMAEKLVSFLKTIGFDKVFDVSFGADLVAYEEAHEFYERLKKGERLPQFTSCCPAWVKHAEHTYPQYLQNLSSVKSPQQALGTVIKKIYARKLGVPEEKIFLVSFMPCTAKKFEAEREEHEGIVDIVLTTRELAQLIKMSRIDINRVEPQPFDRPYGVSSQAGLGFGKAGGVFSCVLSVLNEEIGIEKVDVKSPEDGIRVAEVTLKDGTSFKGAVIYGLGKVKKFLEERKDVEIIEVMACNYGCVGGGGQPYPNDSRIREHRAKVLRDTMGIKSLLTPVENLFLMKLYEEDLKDEHTRHEILHTTYRPRRRYPEKDVEILPVPNGEKRTVKVCLGTSCYTKGSYEILKKLVDYVKENDMEGKIEVLGTFCVENCGASPNVIVDDKIIGGATFEKVLEELSKNG</sequence>
<name>HYDA_THEMA</name>
<organism>
    <name type="scientific">Thermotoga maritima (strain ATCC 43589 / DSM 3109 / JCM 10099 / NBRC 100826 / MSB8)</name>
    <dbReference type="NCBI Taxonomy" id="243274"/>
    <lineage>
        <taxon>Bacteria</taxon>
        <taxon>Thermotogati</taxon>
        <taxon>Thermotogota</taxon>
        <taxon>Thermotogae</taxon>
        <taxon>Thermotogales</taxon>
        <taxon>Thermotogaceae</taxon>
        <taxon>Thermotoga</taxon>
    </lineage>
</organism>
<keyword id="KW-0001">2Fe-2S</keyword>
<keyword id="KW-0002">3D-structure</keyword>
<keyword id="KW-0004">4Fe-4S</keyword>
<keyword id="KW-0963">Cytoplasm</keyword>
<keyword id="KW-0903">Direct protein sequencing</keyword>
<keyword id="KW-0408">Iron</keyword>
<keyword id="KW-0411">Iron-sulfur</keyword>
<keyword id="KW-0479">Metal-binding</keyword>
<keyword id="KW-0520">NAD</keyword>
<keyword id="KW-0560">Oxidoreductase</keyword>
<keyword id="KW-1185">Reference proteome</keyword>
<keyword id="KW-0677">Repeat</keyword>
<feature type="chain" id="PRO_0000457856" description="Bifurcating [FeFe] hydrogenase alpha subunit">
    <location>
        <begin position="1"/>
        <end position="645"/>
    </location>
</feature>
<feature type="domain" description="2Fe-2S ferredoxin-type" evidence="3">
    <location>
        <begin position="1"/>
        <end position="76"/>
    </location>
</feature>
<feature type="domain" description="4Fe-4S His(Cys)3-ligated-type" evidence="5">
    <location>
        <begin position="76"/>
        <end position="115"/>
    </location>
</feature>
<feature type="domain" description="4Fe-4S ferredoxin-type 1" evidence="4">
    <location>
        <begin position="133"/>
        <end position="164"/>
    </location>
</feature>
<feature type="domain" description="4Fe-4S ferredoxin-type 2" evidence="4">
    <location>
        <begin position="178"/>
        <end position="206"/>
    </location>
</feature>
<feature type="binding site" evidence="3">
    <location>
        <position position="34"/>
    </location>
    <ligand>
        <name>[2Fe-2S] cluster</name>
        <dbReference type="ChEBI" id="CHEBI:190135"/>
        <label>1</label>
    </ligand>
</feature>
<feature type="binding site" evidence="3">
    <location>
        <position position="45"/>
    </location>
    <ligand>
        <name>[2Fe-2S] cluster</name>
        <dbReference type="ChEBI" id="CHEBI:190135"/>
        <label>1</label>
    </ligand>
</feature>
<feature type="binding site" evidence="3">
    <location>
        <position position="48"/>
    </location>
    <ligand>
        <name>[2Fe-2S] cluster</name>
        <dbReference type="ChEBI" id="CHEBI:190135"/>
        <label>1</label>
    </ligand>
</feature>
<feature type="binding site" evidence="3">
    <location>
        <position position="60"/>
    </location>
    <ligand>
        <name>[2Fe-2S] cluster</name>
        <dbReference type="ChEBI" id="CHEBI:190135"/>
        <label>1</label>
    </ligand>
</feature>
<feature type="binding site" evidence="1">
    <location>
        <position position="92"/>
    </location>
    <ligand>
        <name>[4Fe-4S] cluster</name>
        <dbReference type="ChEBI" id="CHEBI:49883"/>
        <label>1</label>
    </ligand>
</feature>
<feature type="binding site" evidence="1">
    <location>
        <position position="96"/>
    </location>
    <ligand>
        <name>[4Fe-4S] cluster</name>
        <dbReference type="ChEBI" id="CHEBI:49883"/>
        <label>1</label>
    </ligand>
</feature>
<feature type="binding site" evidence="1">
    <location>
        <position position="99"/>
    </location>
    <ligand>
        <name>[4Fe-4S] cluster</name>
        <dbReference type="ChEBI" id="CHEBI:49883"/>
        <label>1</label>
    </ligand>
</feature>
<feature type="binding site" evidence="1">
    <location>
        <position position="105"/>
    </location>
    <ligand>
        <name>[4Fe-4S] cluster</name>
        <dbReference type="ChEBI" id="CHEBI:49883"/>
        <label>1</label>
    </ligand>
</feature>
<feature type="binding site" evidence="4">
    <location>
        <position position="143"/>
    </location>
    <ligand>
        <name>[4Fe-4S] cluster</name>
        <dbReference type="ChEBI" id="CHEBI:49883"/>
        <label>2</label>
    </ligand>
</feature>
<feature type="binding site" evidence="4">
    <location>
        <position position="146"/>
    </location>
    <ligand>
        <name>[4Fe-4S] cluster</name>
        <dbReference type="ChEBI" id="CHEBI:49883"/>
        <label>2</label>
    </ligand>
</feature>
<feature type="binding site" evidence="4">
    <location>
        <position position="149"/>
    </location>
    <ligand>
        <name>[4Fe-4S] cluster</name>
        <dbReference type="ChEBI" id="CHEBI:49883"/>
        <label>2</label>
    </ligand>
</feature>
<feature type="binding site" evidence="4">
    <location>
        <position position="153"/>
    </location>
    <ligand>
        <name>[4Fe-4S] cluster</name>
        <dbReference type="ChEBI" id="CHEBI:49883"/>
        <label>3</label>
    </ligand>
</feature>
<feature type="binding site" evidence="4">
    <location>
        <position position="186"/>
    </location>
    <ligand>
        <name>[4Fe-4S] cluster</name>
        <dbReference type="ChEBI" id="CHEBI:49883"/>
        <label>3</label>
    </ligand>
</feature>
<feature type="binding site" evidence="4">
    <location>
        <position position="189"/>
    </location>
    <ligand>
        <name>[4Fe-4S] cluster</name>
        <dbReference type="ChEBI" id="CHEBI:49883"/>
        <label>3</label>
    </ligand>
</feature>
<feature type="binding site" evidence="4">
    <location>
        <position position="192"/>
    </location>
    <ligand>
        <name>[4Fe-4S] cluster</name>
        <dbReference type="ChEBI" id="CHEBI:49883"/>
        <label>3</label>
    </ligand>
</feature>
<feature type="binding site" evidence="4">
    <location>
        <position position="196"/>
    </location>
    <ligand>
        <name>[4Fe-4S] cluster</name>
        <dbReference type="ChEBI" id="CHEBI:49883"/>
        <label>2</label>
    </ligand>
</feature>
<feature type="binding site" evidence="1">
    <location>
        <position position="295"/>
    </location>
    <ligand>
        <name>[4Fe-4S] cluster</name>
        <dbReference type="ChEBI" id="CHEBI:49883"/>
        <label>4</label>
    </ligand>
</feature>
<feature type="binding site" evidence="1">
    <location>
        <position position="350"/>
    </location>
    <ligand>
        <name>[4Fe-4S] cluster</name>
        <dbReference type="ChEBI" id="CHEBI:49883"/>
        <label>4</label>
    </ligand>
</feature>
<feature type="binding site" evidence="1">
    <location>
        <position position="482"/>
    </location>
    <ligand>
        <name>[4Fe-4S] cluster</name>
        <dbReference type="ChEBI" id="CHEBI:49883"/>
        <label>4</label>
    </ligand>
</feature>
<feature type="binding site" evidence="1">
    <location>
        <position position="486"/>
    </location>
    <ligand>
        <name>[4Fe-4S] cluster</name>
        <dbReference type="ChEBI" id="CHEBI:49883"/>
        <label>4</label>
    </ligand>
</feature>
<feature type="binding site" evidence="1">
    <location>
        <position position="486"/>
    </location>
    <ligand>
        <name>Fe(2+)</name>
        <dbReference type="ChEBI" id="CHEBI:29033"/>
    </ligand>
</feature>
<feature type="binding site" evidence="2">
    <location>
        <position position="575"/>
    </location>
    <ligand>
        <name>[2Fe-2S] cluster</name>
        <dbReference type="ChEBI" id="CHEBI:190135"/>
        <label>2</label>
    </ligand>
</feature>
<feature type="binding site" evidence="2">
    <location>
        <position position="580"/>
    </location>
    <ligand>
        <name>[2Fe-2S] cluster</name>
        <dbReference type="ChEBI" id="CHEBI:190135"/>
        <label>2</label>
    </ligand>
</feature>
<feature type="binding site" evidence="2">
    <location>
        <position position="612"/>
    </location>
    <ligand>
        <name>[2Fe-2S] cluster</name>
        <dbReference type="ChEBI" id="CHEBI:190135"/>
        <label>2</label>
    </ligand>
</feature>
<feature type="binding site" evidence="2">
    <location>
        <position position="616"/>
    </location>
    <ligand>
        <name>[2Fe-2S] cluster</name>
        <dbReference type="ChEBI" id="CHEBI:190135"/>
        <label>2</label>
    </ligand>
</feature>
<feature type="strand" evidence="15">
    <location>
        <begin position="2"/>
        <end position="11"/>
    </location>
</feature>
<feature type="helix" evidence="15">
    <location>
        <begin position="19"/>
        <end position="25"/>
    </location>
</feature>
<feature type="strand" evidence="15">
    <location>
        <begin position="42"/>
        <end position="45"/>
    </location>
</feature>
<feature type="strand" evidence="15">
    <location>
        <begin position="49"/>
        <end position="52"/>
    </location>
</feature>
<feature type="strand" evidence="15">
    <location>
        <begin position="55"/>
        <end position="58"/>
    </location>
</feature>
<feature type="helix" evidence="15">
    <location>
        <begin position="59"/>
        <end position="61"/>
    </location>
</feature>
<feature type="strand" evidence="15">
    <location>
        <begin position="69"/>
        <end position="72"/>
    </location>
</feature>
<feature type="helix" evidence="15">
    <location>
        <begin position="75"/>
        <end position="90"/>
    </location>
</feature>
<feature type="helix" evidence="15">
    <location>
        <begin position="96"/>
        <end position="98"/>
    </location>
</feature>
<feature type="turn" evidence="15">
    <location>
        <begin position="100"/>
        <end position="103"/>
    </location>
</feature>
<feature type="helix" evidence="15">
    <location>
        <begin position="106"/>
        <end position="113"/>
    </location>
</feature>
<feature type="strand" evidence="15">
    <location>
        <begin position="133"/>
        <end position="139"/>
    </location>
</feature>
<feature type="helix" evidence="15">
    <location>
        <begin position="140"/>
        <end position="142"/>
    </location>
</feature>
<feature type="helix" evidence="15">
    <location>
        <begin position="148"/>
        <end position="155"/>
    </location>
</feature>
<feature type="strand" evidence="15">
    <location>
        <begin position="163"/>
        <end position="166"/>
    </location>
</feature>
<feature type="helix" evidence="15">
    <location>
        <begin position="168"/>
        <end position="170"/>
    </location>
</feature>
<feature type="strand" evidence="15">
    <location>
        <begin position="172"/>
        <end position="174"/>
    </location>
</feature>
<feature type="helix" evidence="15">
    <location>
        <begin position="176"/>
        <end position="178"/>
    </location>
</feature>
<feature type="helix" evidence="15">
    <location>
        <begin position="181"/>
        <end position="183"/>
    </location>
</feature>
<feature type="helix" evidence="15">
    <location>
        <begin position="191"/>
        <end position="195"/>
    </location>
</feature>
<feature type="strand" evidence="15">
    <location>
        <begin position="197"/>
        <end position="203"/>
    </location>
</feature>
<feature type="helix" evidence="15">
    <location>
        <begin position="207"/>
        <end position="215"/>
    </location>
</feature>
<feature type="strand" evidence="15">
    <location>
        <begin position="216"/>
        <end position="224"/>
    </location>
</feature>
<feature type="helix" evidence="15">
    <location>
        <begin position="226"/>
        <end position="229"/>
    </location>
</feature>
<feature type="turn" evidence="15">
    <location>
        <begin position="230"/>
        <end position="233"/>
    </location>
</feature>
<feature type="helix" evidence="15">
    <location>
        <begin position="234"/>
        <end position="236"/>
    </location>
</feature>
<feature type="helix" evidence="15">
    <location>
        <begin position="244"/>
        <end position="254"/>
    </location>
</feature>
<feature type="strand" evidence="15">
    <location>
        <begin position="258"/>
        <end position="262"/>
    </location>
</feature>
<feature type="helix" evidence="15">
    <location>
        <begin position="263"/>
        <end position="284"/>
    </location>
</feature>
<feature type="strand" evidence="15">
    <location>
        <begin position="289"/>
        <end position="291"/>
    </location>
</feature>
<feature type="helix" evidence="15">
    <location>
        <begin position="296"/>
        <end position="305"/>
    </location>
</feature>
<feature type="helix" evidence="15">
    <location>
        <begin position="307"/>
        <end position="309"/>
    </location>
</feature>
<feature type="turn" evidence="15">
    <location>
        <begin position="310"/>
        <end position="312"/>
    </location>
</feature>
<feature type="helix" evidence="15">
    <location>
        <begin position="319"/>
        <end position="329"/>
    </location>
</feature>
<feature type="helix" evidence="15">
    <location>
        <begin position="331"/>
        <end position="335"/>
    </location>
</feature>
<feature type="helix" evidence="15">
    <location>
        <begin position="339"/>
        <end position="341"/>
    </location>
</feature>
<feature type="strand" evidence="15">
    <location>
        <begin position="342"/>
        <end position="349"/>
    </location>
</feature>
<feature type="helix" evidence="15">
    <location>
        <begin position="352"/>
        <end position="357"/>
    </location>
</feature>
<feature type="helix" evidence="15">
    <location>
        <begin position="360"/>
        <end position="362"/>
    </location>
</feature>
<feature type="turn" evidence="16">
    <location>
        <begin position="363"/>
        <end position="365"/>
    </location>
</feature>
<feature type="strand" evidence="15">
    <location>
        <begin position="368"/>
        <end position="371"/>
    </location>
</feature>
<feature type="helix" evidence="15">
    <location>
        <begin position="372"/>
        <end position="382"/>
    </location>
</feature>
<feature type="helix" evidence="15">
    <location>
        <begin position="386"/>
        <end position="388"/>
    </location>
</feature>
<feature type="strand" evidence="16">
    <location>
        <begin position="396"/>
        <end position="398"/>
    </location>
</feature>
<feature type="helix" evidence="15">
    <location>
        <begin position="403"/>
        <end position="406"/>
    </location>
</feature>
<feature type="helix" evidence="15">
    <location>
        <begin position="407"/>
        <end position="409"/>
    </location>
</feature>
<feature type="helix" evidence="15">
    <location>
        <begin position="413"/>
        <end position="425"/>
    </location>
</feature>
<feature type="strand" evidence="15">
    <location>
        <begin position="428"/>
        <end position="437"/>
    </location>
</feature>
<feature type="strand" evidence="15">
    <location>
        <begin position="440"/>
        <end position="447"/>
    </location>
</feature>
<feature type="strand" evidence="15">
    <location>
        <begin position="450"/>
        <end position="460"/>
    </location>
</feature>
<feature type="helix" evidence="15">
    <location>
        <begin position="463"/>
        <end position="470"/>
    </location>
</feature>
<feature type="strand" evidence="15">
    <location>
        <begin position="475"/>
        <end position="482"/>
    </location>
</feature>
<feature type="helix" evidence="15">
    <location>
        <begin position="485"/>
        <end position="488"/>
    </location>
</feature>
<feature type="helix" evidence="15">
    <location>
        <begin position="498"/>
        <end position="513"/>
    </location>
</feature>
<feature type="helix" evidence="15">
    <location>
        <begin position="520"/>
        <end position="522"/>
    </location>
</feature>
<feature type="helix" evidence="15">
    <location>
        <begin position="524"/>
        <end position="533"/>
    </location>
</feature>
<feature type="helix" evidence="15">
    <location>
        <begin position="537"/>
        <end position="544"/>
    </location>
</feature>
<feature type="strand" evidence="16">
    <location>
        <begin position="559"/>
        <end position="562"/>
    </location>
</feature>
<feature type="strand" evidence="16">
    <location>
        <begin position="565"/>
        <end position="568"/>
    </location>
</feature>
<feature type="strand" evidence="16">
    <location>
        <begin position="572"/>
        <end position="575"/>
    </location>
</feature>
<feature type="helix" evidence="16">
    <location>
        <begin position="578"/>
        <end position="581"/>
    </location>
</feature>
<feature type="turn" evidence="16">
    <location>
        <begin position="582"/>
        <end position="584"/>
    </location>
</feature>
<feature type="helix" evidence="16">
    <location>
        <begin position="585"/>
        <end position="598"/>
    </location>
</feature>
<feature type="strand" evidence="16">
    <location>
        <begin position="607"/>
        <end position="610"/>
    </location>
</feature>
<feature type="strand" evidence="16">
    <location>
        <begin position="622"/>
        <end position="624"/>
    </location>
</feature>
<feature type="helix" evidence="16">
    <location>
        <begin position="634"/>
        <end position="641"/>
    </location>
</feature>
<dbReference type="EC" id="1.12.1.4" evidence="7"/>
<dbReference type="EMBL" id="AF044577">
    <property type="protein sequence ID" value="AAC02686.1"/>
    <property type="molecule type" value="Genomic_DNA"/>
</dbReference>
<dbReference type="EMBL" id="AE000512">
    <property type="protein sequence ID" value="AAD36496.1"/>
    <property type="molecule type" value="Genomic_DNA"/>
</dbReference>
<dbReference type="EMBL" id="CP004077">
    <property type="protein sequence ID" value="AGL50356.1"/>
    <property type="molecule type" value="Genomic_DNA"/>
</dbReference>
<dbReference type="PIR" id="G72256">
    <property type="entry name" value="G72256"/>
</dbReference>
<dbReference type="RefSeq" id="NP_229226.1">
    <property type="nucleotide sequence ID" value="NC_000853.1"/>
</dbReference>
<dbReference type="RefSeq" id="WP_004081677.1">
    <property type="nucleotide sequence ID" value="NZ_CP011107.1"/>
</dbReference>
<dbReference type="PDB" id="7P5H">
    <property type="method" value="EM"/>
    <property type="resolution" value="2.30 A"/>
    <property type="chains" value="A/D/a/d=1-645"/>
</dbReference>
<dbReference type="PDB" id="7P8N">
    <property type="method" value="EM"/>
    <property type="resolution" value="2.80 A"/>
    <property type="chains" value="A/a=1-645"/>
</dbReference>
<dbReference type="PDB" id="7P91">
    <property type="method" value="EM"/>
    <property type="resolution" value="2.80 A"/>
    <property type="chains" value="A/a=1-645"/>
</dbReference>
<dbReference type="PDB" id="7P92">
    <property type="method" value="EM"/>
    <property type="resolution" value="2.70 A"/>
    <property type="chains" value="A=1-645"/>
</dbReference>
<dbReference type="PDBsum" id="7P5H"/>
<dbReference type="PDBsum" id="7P8N"/>
<dbReference type="PDBsum" id="7P91"/>
<dbReference type="PDBsum" id="7P92"/>
<dbReference type="EMDB" id="EMD-13199"/>
<dbReference type="EMDB" id="EMD-13254"/>
<dbReference type="EMDB" id="EMD-13257"/>
<dbReference type="EMDB" id="EMD-13258"/>
<dbReference type="SMR" id="O52683"/>
<dbReference type="STRING" id="243274.TM_1426"/>
<dbReference type="PaxDb" id="243274-THEMA_07185"/>
<dbReference type="DNASU" id="898049"/>
<dbReference type="EnsemblBacteria" id="AAD36496">
    <property type="protein sequence ID" value="AAD36496"/>
    <property type="gene ID" value="TM_1426"/>
</dbReference>
<dbReference type="KEGG" id="tma:TM1426"/>
<dbReference type="KEGG" id="tmi:THEMA_07185"/>
<dbReference type="KEGG" id="tmm:Tmari_1432"/>
<dbReference type="KEGG" id="tmw:THMA_1456"/>
<dbReference type="PATRIC" id="fig|2336.4.peg.1418"/>
<dbReference type="eggNOG" id="COG1905">
    <property type="taxonomic scope" value="Bacteria"/>
</dbReference>
<dbReference type="eggNOG" id="COG3383">
    <property type="taxonomic scope" value="Bacteria"/>
</dbReference>
<dbReference type="eggNOG" id="COG4624">
    <property type="taxonomic scope" value="Bacteria"/>
</dbReference>
<dbReference type="OrthoDB" id="9803192at2"/>
<dbReference type="BioCyc" id="MetaCyc:MONOMER-261"/>
<dbReference type="Proteomes" id="UP000008183">
    <property type="component" value="Chromosome"/>
</dbReference>
<dbReference type="GO" id="GO:0005737">
    <property type="term" value="C:cytoplasm"/>
    <property type="evidence" value="ECO:0007669"/>
    <property type="project" value="UniProtKB-SubCell"/>
</dbReference>
<dbReference type="GO" id="GO:0016020">
    <property type="term" value="C:membrane"/>
    <property type="evidence" value="ECO:0007669"/>
    <property type="project" value="InterPro"/>
</dbReference>
<dbReference type="GO" id="GO:0051537">
    <property type="term" value="F:2 iron, 2 sulfur cluster binding"/>
    <property type="evidence" value="ECO:0007669"/>
    <property type="project" value="UniProtKB-KW"/>
</dbReference>
<dbReference type="GO" id="GO:0051539">
    <property type="term" value="F:4 iron, 4 sulfur cluster binding"/>
    <property type="evidence" value="ECO:0007669"/>
    <property type="project" value="UniProtKB-KW"/>
</dbReference>
<dbReference type="GO" id="GO:0046872">
    <property type="term" value="F:metal ion binding"/>
    <property type="evidence" value="ECO:0007669"/>
    <property type="project" value="UniProtKB-KW"/>
</dbReference>
<dbReference type="GO" id="GO:0008137">
    <property type="term" value="F:NADH dehydrogenase (ubiquinone) activity"/>
    <property type="evidence" value="ECO:0007669"/>
    <property type="project" value="InterPro"/>
</dbReference>
<dbReference type="GO" id="GO:0042773">
    <property type="term" value="P:ATP synthesis coupled electron transport"/>
    <property type="evidence" value="ECO:0007669"/>
    <property type="project" value="InterPro"/>
</dbReference>
<dbReference type="CDD" id="cd00207">
    <property type="entry name" value="fer2"/>
    <property type="match status" value="1"/>
</dbReference>
<dbReference type="CDD" id="cd02980">
    <property type="entry name" value="TRX_Fd_family"/>
    <property type="match status" value="1"/>
</dbReference>
<dbReference type="FunFam" id="3.30.70.20:FF:000035">
    <property type="entry name" value="Iron hydrogenase 1"/>
    <property type="match status" value="1"/>
</dbReference>
<dbReference type="FunFam" id="3.10.20.740:FF:000008">
    <property type="entry name" value="Periplasmic [Fe] hydrogenase 1"/>
    <property type="match status" value="1"/>
</dbReference>
<dbReference type="Gene3D" id="3.10.20.740">
    <property type="match status" value="1"/>
</dbReference>
<dbReference type="Gene3D" id="3.30.70.20">
    <property type="match status" value="1"/>
</dbReference>
<dbReference type="Gene3D" id="3.40.50.1780">
    <property type="match status" value="1"/>
</dbReference>
<dbReference type="Gene3D" id="3.40.950.10">
    <property type="entry name" value="Fe-only Hydrogenase (Larger Subunit), Chain L, domain 3"/>
    <property type="match status" value="1"/>
</dbReference>
<dbReference type="Gene3D" id="3.40.30.10">
    <property type="entry name" value="Glutaredoxin"/>
    <property type="match status" value="1"/>
</dbReference>
<dbReference type="InterPro" id="IPR036010">
    <property type="entry name" value="2Fe-2S_ferredoxin-like_sf"/>
</dbReference>
<dbReference type="InterPro" id="IPR001041">
    <property type="entry name" value="2Fe-2S_ferredoxin-type"/>
</dbReference>
<dbReference type="InterPro" id="IPR017896">
    <property type="entry name" value="4Fe4S_Fe-S-bd"/>
</dbReference>
<dbReference type="InterPro" id="IPR017900">
    <property type="entry name" value="4Fe4S_Fe_S_CS"/>
</dbReference>
<dbReference type="InterPro" id="IPR050340">
    <property type="entry name" value="Cytosolic_Fe-S_CAF"/>
</dbReference>
<dbReference type="InterPro" id="IPR009016">
    <property type="entry name" value="Fe_hydrogenase"/>
</dbReference>
<dbReference type="InterPro" id="IPR004108">
    <property type="entry name" value="Fe_hydrogenase_lsu_C"/>
</dbReference>
<dbReference type="InterPro" id="IPR003149">
    <property type="entry name" value="Fe_hydrogenase_ssu"/>
</dbReference>
<dbReference type="InterPro" id="IPR000283">
    <property type="entry name" value="NADH_UbQ_OxRdtase_75kDa_su_CS"/>
</dbReference>
<dbReference type="InterPro" id="IPR019574">
    <property type="entry name" value="NADH_UbQ_OxRdtase_Gsu_4Fe4S-bd"/>
</dbReference>
<dbReference type="InterPro" id="IPR036249">
    <property type="entry name" value="Thioredoxin-like_sf"/>
</dbReference>
<dbReference type="PANTHER" id="PTHR11615">
    <property type="entry name" value="NITRATE, FORMATE, IRON DEHYDROGENASE"/>
    <property type="match status" value="1"/>
</dbReference>
<dbReference type="Pfam" id="PF01257">
    <property type="entry name" value="2Fe-2S_thioredx"/>
    <property type="match status" value="1"/>
</dbReference>
<dbReference type="Pfam" id="PF02906">
    <property type="entry name" value="Fe_hyd_lg_C"/>
    <property type="match status" value="1"/>
</dbReference>
<dbReference type="Pfam" id="PF02256">
    <property type="entry name" value="Fe_hyd_SSU"/>
    <property type="match status" value="1"/>
</dbReference>
<dbReference type="Pfam" id="PF13510">
    <property type="entry name" value="Fer2_4"/>
    <property type="match status" value="1"/>
</dbReference>
<dbReference type="Pfam" id="PF12838">
    <property type="entry name" value="Fer4_7"/>
    <property type="match status" value="1"/>
</dbReference>
<dbReference type="Pfam" id="PF10588">
    <property type="entry name" value="NADH-G_4Fe-4S_3"/>
    <property type="match status" value="1"/>
</dbReference>
<dbReference type="SMART" id="SM00902">
    <property type="entry name" value="Fe_hyd_SSU"/>
    <property type="match status" value="1"/>
</dbReference>
<dbReference type="SMART" id="SM00929">
    <property type="entry name" value="NADH-G_4Fe-4S_3"/>
    <property type="match status" value="1"/>
</dbReference>
<dbReference type="SUPFAM" id="SSF54292">
    <property type="entry name" value="2Fe-2S ferredoxin-like"/>
    <property type="match status" value="1"/>
</dbReference>
<dbReference type="SUPFAM" id="SSF54862">
    <property type="entry name" value="4Fe-4S ferredoxins"/>
    <property type="match status" value="1"/>
</dbReference>
<dbReference type="SUPFAM" id="SSF53920">
    <property type="entry name" value="Fe-only hydrogenase"/>
    <property type="match status" value="1"/>
</dbReference>
<dbReference type="SUPFAM" id="SSF52833">
    <property type="entry name" value="Thioredoxin-like"/>
    <property type="match status" value="1"/>
</dbReference>
<dbReference type="PROSITE" id="PS51085">
    <property type="entry name" value="2FE2S_FER_2"/>
    <property type="match status" value="1"/>
</dbReference>
<dbReference type="PROSITE" id="PS00198">
    <property type="entry name" value="4FE4S_FER_1"/>
    <property type="match status" value="2"/>
</dbReference>
<dbReference type="PROSITE" id="PS51379">
    <property type="entry name" value="4FE4S_FER_2"/>
    <property type="match status" value="2"/>
</dbReference>
<dbReference type="PROSITE" id="PS51839">
    <property type="entry name" value="4FE4S_HC3"/>
    <property type="match status" value="1"/>
</dbReference>
<dbReference type="PROSITE" id="PS00641">
    <property type="entry name" value="COMPLEX1_75K_1"/>
    <property type="match status" value="1"/>
</dbReference>
<comment type="function">
    <text evidence="7">Catalyzes the oxidation of the physiological electron carriers NADH and reduced ferredoxin, coupled to the production of H(2) (PubMed:19411328). Acts as a bifurcating [FeFe] hydrogenase, which uses the exergonic oxidation of reduced ferredoxin to drive the unfavorable oxidation of NADH to produce H(2) (PubMed:19411328). The alpha subunit contains the catalytic H-cluster (PubMed:19411328).</text>
</comment>
<comment type="catalytic activity">
    <reaction evidence="7">
        <text>2 H2 + 2 oxidized [2Fe-2S]-[ferredoxin] + NAD(+) = 2 reduced [2Fe-2S]-[ferredoxin] + NADH + 3 H(+)</text>
        <dbReference type="Rhea" id="RHEA:30279"/>
        <dbReference type="Rhea" id="RHEA-COMP:10000"/>
        <dbReference type="Rhea" id="RHEA-COMP:10001"/>
        <dbReference type="ChEBI" id="CHEBI:15378"/>
        <dbReference type="ChEBI" id="CHEBI:18276"/>
        <dbReference type="ChEBI" id="CHEBI:33737"/>
        <dbReference type="ChEBI" id="CHEBI:33738"/>
        <dbReference type="ChEBI" id="CHEBI:57540"/>
        <dbReference type="ChEBI" id="CHEBI:57945"/>
        <dbReference type="EC" id="1.12.1.4"/>
    </reaction>
    <physiologicalReaction direction="right-to-left" evidence="7">
        <dbReference type="Rhea" id="RHEA:30281"/>
    </physiologicalReaction>
</comment>
<comment type="cofactor">
    <cofactor evidence="6">
        <name>[2Fe-2S] cluster</name>
        <dbReference type="ChEBI" id="CHEBI:190135"/>
    </cofactor>
    <text evidence="11 12">May bind 2 [2Fe-2S] clusters per subunit.</text>
</comment>
<comment type="cofactor">
    <cofactor evidence="6">
        <name>[4Fe-4S] cluster</name>
        <dbReference type="ChEBI" id="CHEBI:49883"/>
    </cofactor>
    <text evidence="11 12">May bind 4 [4Fe-4S] clusters per subunit.</text>
</comment>
<comment type="cofactor">
    <cofactor evidence="6">
        <name>Fe(2+)</name>
        <dbReference type="ChEBI" id="CHEBI:29033"/>
    </cofactor>
    <text evidence="11">Contains a catalytic Fe binuclear center (H-cluster), which is coordinated by Cys-486 and by non-protein ligands.</text>
</comment>
<comment type="subunit">
    <text evidence="6">Heterotrimer composed of HydA (alpha subunit), HydB (beta subunit) and HydC (gamma subunit) (PubMed:10482784). Near neutral and acidic pH conditions favor oligomerization of the heterotrimeric holoenzyme (PubMed:10482784).</text>
</comment>
<comment type="subcellular location">
    <subcellularLocation>
        <location evidence="7">Cytoplasm</location>
    </subcellularLocation>
</comment>